<accession>Q2YUN4</accession>
<reference key="1">
    <citation type="journal article" date="2007" name="PLoS ONE">
        <title>Molecular correlates of host specialization in Staphylococcus aureus.</title>
        <authorList>
            <person name="Herron-Olson L."/>
            <person name="Fitzgerald J.R."/>
            <person name="Musser J.M."/>
            <person name="Kapur V."/>
        </authorList>
    </citation>
    <scope>NUCLEOTIDE SEQUENCE [LARGE SCALE GENOMIC DNA]</scope>
    <source>
        <strain>bovine RF122 / ET3-1</strain>
    </source>
</reference>
<keyword id="KW-0067">ATP-binding</keyword>
<keyword id="KW-0963">Cytoplasm</keyword>
<keyword id="KW-0237">DNA synthesis</keyword>
<keyword id="KW-0418">Kinase</keyword>
<keyword id="KW-0479">Metal-binding</keyword>
<keyword id="KW-0547">Nucleotide-binding</keyword>
<keyword id="KW-0808">Transferase</keyword>
<keyword id="KW-0862">Zinc</keyword>
<gene>
    <name evidence="1" type="primary">tdk</name>
    <name type="ordered locus">SAB2003c</name>
</gene>
<name>KITH_STAAB</name>
<comment type="catalytic activity">
    <reaction evidence="1">
        <text>thymidine + ATP = dTMP + ADP + H(+)</text>
        <dbReference type="Rhea" id="RHEA:19129"/>
        <dbReference type="ChEBI" id="CHEBI:15378"/>
        <dbReference type="ChEBI" id="CHEBI:17748"/>
        <dbReference type="ChEBI" id="CHEBI:30616"/>
        <dbReference type="ChEBI" id="CHEBI:63528"/>
        <dbReference type="ChEBI" id="CHEBI:456216"/>
        <dbReference type="EC" id="2.7.1.21"/>
    </reaction>
</comment>
<comment type="subunit">
    <text evidence="1">Homotetramer.</text>
</comment>
<comment type="subcellular location">
    <subcellularLocation>
        <location evidence="1">Cytoplasm</location>
    </subcellularLocation>
</comment>
<comment type="similarity">
    <text evidence="1">Belongs to the thymidine kinase family.</text>
</comment>
<sequence>MYETYHSGWIECITGSMFSGKSEELIRRLRRGIYAKQKVVVFKPAIDDRYHKEKVVSHNGNAIEAINISKASEIMTHDLTNVDVIGIDEVQFFDDEIVSIVEKLSADGHRVIVAGLDMDFRGEPFEPMPKLMAVSEQVTKLQAVCAVCGSSSSRTQRLINGKPAKIDDPIILVGANESYEPRCRAHHIVAPSDNNKEEL</sequence>
<organism>
    <name type="scientific">Staphylococcus aureus (strain bovine RF122 / ET3-1)</name>
    <dbReference type="NCBI Taxonomy" id="273036"/>
    <lineage>
        <taxon>Bacteria</taxon>
        <taxon>Bacillati</taxon>
        <taxon>Bacillota</taxon>
        <taxon>Bacilli</taxon>
        <taxon>Bacillales</taxon>
        <taxon>Staphylococcaceae</taxon>
        <taxon>Staphylococcus</taxon>
    </lineage>
</organism>
<dbReference type="EC" id="2.7.1.21" evidence="1"/>
<dbReference type="EMBL" id="AJ938182">
    <property type="protein sequence ID" value="CAI81692.1"/>
    <property type="molecule type" value="Genomic_DNA"/>
</dbReference>
<dbReference type="RefSeq" id="WP_000273356.1">
    <property type="nucleotide sequence ID" value="NC_007622.1"/>
</dbReference>
<dbReference type="SMR" id="Q2YUN4"/>
<dbReference type="KEGG" id="sab:SAB2003c"/>
<dbReference type="HOGENOM" id="CLU_064400_3_0_9"/>
<dbReference type="GO" id="GO:0005829">
    <property type="term" value="C:cytosol"/>
    <property type="evidence" value="ECO:0007669"/>
    <property type="project" value="TreeGrafter"/>
</dbReference>
<dbReference type="GO" id="GO:0005524">
    <property type="term" value="F:ATP binding"/>
    <property type="evidence" value="ECO:0007669"/>
    <property type="project" value="UniProtKB-UniRule"/>
</dbReference>
<dbReference type="GO" id="GO:0004797">
    <property type="term" value="F:thymidine kinase activity"/>
    <property type="evidence" value="ECO:0007669"/>
    <property type="project" value="UniProtKB-UniRule"/>
</dbReference>
<dbReference type="GO" id="GO:0008270">
    <property type="term" value="F:zinc ion binding"/>
    <property type="evidence" value="ECO:0007669"/>
    <property type="project" value="UniProtKB-UniRule"/>
</dbReference>
<dbReference type="GO" id="GO:0071897">
    <property type="term" value="P:DNA biosynthetic process"/>
    <property type="evidence" value="ECO:0007669"/>
    <property type="project" value="UniProtKB-KW"/>
</dbReference>
<dbReference type="GO" id="GO:0046104">
    <property type="term" value="P:thymidine metabolic process"/>
    <property type="evidence" value="ECO:0007669"/>
    <property type="project" value="TreeGrafter"/>
</dbReference>
<dbReference type="FunFam" id="3.30.60.20:FF:000026">
    <property type="entry name" value="Thymidine kinase"/>
    <property type="match status" value="1"/>
</dbReference>
<dbReference type="FunFam" id="3.40.50.300:FF:000384">
    <property type="entry name" value="Thymidine kinase"/>
    <property type="match status" value="1"/>
</dbReference>
<dbReference type="Gene3D" id="3.30.60.20">
    <property type="match status" value="1"/>
</dbReference>
<dbReference type="Gene3D" id="3.40.50.300">
    <property type="entry name" value="P-loop containing nucleotide triphosphate hydrolases"/>
    <property type="match status" value="1"/>
</dbReference>
<dbReference type="HAMAP" id="MF_00124">
    <property type="entry name" value="Thymidine_kinase"/>
    <property type="match status" value="1"/>
</dbReference>
<dbReference type="InterPro" id="IPR027417">
    <property type="entry name" value="P-loop_NTPase"/>
</dbReference>
<dbReference type="InterPro" id="IPR001267">
    <property type="entry name" value="Thymidine_kinase"/>
</dbReference>
<dbReference type="InterPro" id="IPR020633">
    <property type="entry name" value="Thymidine_kinase_CS"/>
</dbReference>
<dbReference type="NCBIfam" id="NF003296">
    <property type="entry name" value="PRK04296.1-1"/>
    <property type="match status" value="1"/>
</dbReference>
<dbReference type="PANTHER" id="PTHR11441">
    <property type="entry name" value="THYMIDINE KINASE"/>
    <property type="match status" value="1"/>
</dbReference>
<dbReference type="PANTHER" id="PTHR11441:SF0">
    <property type="entry name" value="THYMIDINE KINASE, CYTOSOLIC"/>
    <property type="match status" value="1"/>
</dbReference>
<dbReference type="Pfam" id="PF00265">
    <property type="entry name" value="TK"/>
    <property type="match status" value="1"/>
</dbReference>
<dbReference type="PIRSF" id="PIRSF035805">
    <property type="entry name" value="TK_cell"/>
    <property type="match status" value="1"/>
</dbReference>
<dbReference type="SUPFAM" id="SSF57716">
    <property type="entry name" value="Glucocorticoid receptor-like (DNA-binding domain)"/>
    <property type="match status" value="1"/>
</dbReference>
<dbReference type="SUPFAM" id="SSF52540">
    <property type="entry name" value="P-loop containing nucleoside triphosphate hydrolases"/>
    <property type="match status" value="1"/>
</dbReference>
<dbReference type="PROSITE" id="PS00603">
    <property type="entry name" value="TK_CELLULAR_TYPE"/>
    <property type="match status" value="1"/>
</dbReference>
<feature type="chain" id="PRO_0000242806" description="Thymidine kinase">
    <location>
        <begin position="1"/>
        <end position="199"/>
    </location>
</feature>
<feature type="active site" description="Proton acceptor" evidence="1">
    <location>
        <position position="89"/>
    </location>
</feature>
<feature type="binding site" evidence="1">
    <location>
        <begin position="15"/>
        <end position="22"/>
    </location>
    <ligand>
        <name>ATP</name>
        <dbReference type="ChEBI" id="CHEBI:30616"/>
    </ligand>
</feature>
<feature type="binding site" evidence="1">
    <location>
        <begin position="88"/>
        <end position="91"/>
    </location>
    <ligand>
        <name>ATP</name>
        <dbReference type="ChEBI" id="CHEBI:30616"/>
    </ligand>
</feature>
<feature type="binding site" evidence="1">
    <location>
        <position position="145"/>
    </location>
    <ligand>
        <name>Zn(2+)</name>
        <dbReference type="ChEBI" id="CHEBI:29105"/>
    </ligand>
</feature>
<feature type="binding site" evidence="1">
    <location>
        <position position="148"/>
    </location>
    <ligand>
        <name>Zn(2+)</name>
        <dbReference type="ChEBI" id="CHEBI:29105"/>
    </ligand>
</feature>
<feature type="binding site" evidence="1">
    <location>
        <position position="183"/>
    </location>
    <ligand>
        <name>Zn(2+)</name>
        <dbReference type="ChEBI" id="CHEBI:29105"/>
    </ligand>
</feature>
<feature type="binding site" evidence="1">
    <location>
        <position position="186"/>
    </location>
    <ligand>
        <name>Zn(2+)</name>
        <dbReference type="ChEBI" id="CHEBI:29105"/>
    </ligand>
</feature>
<evidence type="ECO:0000255" key="1">
    <source>
        <dbReference type="HAMAP-Rule" id="MF_00124"/>
    </source>
</evidence>
<protein>
    <recommendedName>
        <fullName evidence="1">Thymidine kinase</fullName>
        <ecNumber evidence="1">2.7.1.21</ecNumber>
    </recommendedName>
</protein>
<proteinExistence type="inferred from homology"/>